<organism>
    <name type="scientific">Conus regius</name>
    <name type="common">Crown cone</name>
    <dbReference type="NCBI Taxonomy" id="101314"/>
    <lineage>
        <taxon>Eukaryota</taxon>
        <taxon>Metazoa</taxon>
        <taxon>Spiralia</taxon>
        <taxon>Lophotrochozoa</taxon>
        <taxon>Mollusca</taxon>
        <taxon>Gastropoda</taxon>
        <taxon>Caenogastropoda</taxon>
        <taxon>Neogastropoda</taxon>
        <taxon>Conoidea</taxon>
        <taxon>Conidae</taxon>
        <taxon>Conus</taxon>
        <taxon>Stephanoconus</taxon>
    </lineage>
</organism>
<reference key="1">
    <citation type="journal article" date="2006" name="Prog. Mol. Subcell. Biol.">
        <title>Hyperhydroxylation: a new strategy for neuronal targeting by venomous marine molluscs.</title>
        <authorList>
            <person name="Franco A."/>
            <person name="Pisarewicz K."/>
            <person name="Moller C."/>
            <person name="Mora D."/>
            <person name="Fields G.B."/>
            <person name="Mari F."/>
        </authorList>
    </citation>
    <scope>PROTEIN SEQUENCE</scope>
    <scope>SUBCELLULAR LOCATION</scope>
    <scope>TISSUE SPECIFICITY</scope>
    <scope>HYDROXYLATION AT PRO-6</scope>
    <scope>AMIDATION AT CYS-12</scope>
    <source>
        <tissue>Venom</tissue>
    </source>
</reference>
<proteinExistence type="evidence at protein level"/>
<keyword id="KW-0008">Acetylcholine receptor inhibiting toxin</keyword>
<keyword id="KW-0027">Amidation</keyword>
<keyword id="KW-0903">Direct protein sequencing</keyword>
<keyword id="KW-1015">Disulfide bond</keyword>
<keyword id="KW-0379">Hydroxylation</keyword>
<keyword id="KW-0872">Ion channel impairing toxin</keyword>
<keyword id="KW-0528">Neurotoxin</keyword>
<keyword id="KW-0629">Postsynaptic neurotoxin</keyword>
<keyword id="KW-0964">Secreted</keyword>
<keyword id="KW-0800">Toxin</keyword>
<accession>P85009</accession>
<name>CA1B_CONRE</name>
<dbReference type="ConoServer" id="28">
    <property type="toxin name" value="Reg1b/Reg1c"/>
</dbReference>
<dbReference type="GO" id="GO:0005576">
    <property type="term" value="C:extracellular region"/>
    <property type="evidence" value="ECO:0007669"/>
    <property type="project" value="UniProtKB-SubCell"/>
</dbReference>
<dbReference type="GO" id="GO:0035792">
    <property type="term" value="C:host cell postsynaptic membrane"/>
    <property type="evidence" value="ECO:0007669"/>
    <property type="project" value="UniProtKB-KW"/>
</dbReference>
<dbReference type="GO" id="GO:0030550">
    <property type="term" value="F:acetylcholine receptor inhibitor activity"/>
    <property type="evidence" value="ECO:0007669"/>
    <property type="project" value="UniProtKB-KW"/>
</dbReference>
<dbReference type="GO" id="GO:0099106">
    <property type="term" value="F:ion channel regulator activity"/>
    <property type="evidence" value="ECO:0007669"/>
    <property type="project" value="UniProtKB-KW"/>
</dbReference>
<dbReference type="GO" id="GO:0090729">
    <property type="term" value="F:toxin activity"/>
    <property type="evidence" value="ECO:0007669"/>
    <property type="project" value="UniProtKB-KW"/>
</dbReference>
<sequence length="12" mass="1337">GCCSDPRCKHQC</sequence>
<evidence type="ECO:0000250" key="1">
    <source>
        <dbReference type="UniProtKB" id="P0C1D0"/>
    </source>
</evidence>
<evidence type="ECO:0000250" key="2">
    <source>
        <dbReference type="UniProtKB" id="P50983"/>
    </source>
</evidence>
<evidence type="ECO:0000269" key="3">
    <source>
    </source>
</evidence>
<evidence type="ECO:0000303" key="4">
    <source>
    </source>
</evidence>
<evidence type="ECO:0000305" key="5"/>
<protein>
    <recommendedName>
        <fullName evidence="4">Alpha-conotoxin-like Reg1b/Reg1c</fullName>
    </recommendedName>
</protein>
<comment type="function">
    <text evidence="2">Alpha-conotoxins act on postsynaptic membranes, they bind to the nicotinic acetylcholine receptors (nAChR) and thus inhibit them.</text>
</comment>
<comment type="subcellular location">
    <subcellularLocation>
        <location evidence="3">Secreted</location>
    </subcellularLocation>
</comment>
<comment type="tissue specificity">
    <text evidence="3">Expressed by the venom duct.</text>
</comment>
<comment type="domain">
    <text evidence="5">The cysteine framework is I (CC-C-C). Alpha4/3 pattern.</text>
</comment>
<comment type="PTM">
    <text evidence="3">Occurs in 2 forms, Reg1b has a 4-hydroxyproline at Pro-6, Reg1c contains unmodified proline at Pro-6.</text>
</comment>
<comment type="similarity">
    <text evidence="5">Belongs to the conotoxin A superfamily.</text>
</comment>
<feature type="peptide" id="PRO_0000259385" description="Alpha-conotoxin-like Reg1b/Reg1c" evidence="3">
    <location>
        <begin position="1"/>
        <end position="12"/>
    </location>
</feature>
<feature type="modified residue" description="4-hydroxyproline; in form Reg1b" evidence="3">
    <location>
        <position position="6"/>
    </location>
</feature>
<feature type="modified residue" description="Cysteine amide" evidence="3">
    <location>
        <position position="12"/>
    </location>
</feature>
<feature type="disulfide bond" evidence="1">
    <location>
        <begin position="2"/>
        <end position="8"/>
    </location>
</feature>
<feature type="disulfide bond" evidence="1">
    <location>
        <begin position="3"/>
        <end position="12"/>
    </location>
</feature>